<keyword id="KW-1003">Cell membrane</keyword>
<keyword id="KW-0472">Membrane</keyword>
<keyword id="KW-0520">NAD</keyword>
<keyword id="KW-0874">Quinone</keyword>
<keyword id="KW-1185">Reference proteome</keyword>
<keyword id="KW-1278">Translocase</keyword>
<keyword id="KW-0812">Transmembrane</keyword>
<keyword id="KW-1133">Transmembrane helix</keyword>
<keyword id="KW-0813">Transport</keyword>
<dbReference type="EC" id="7.1.1.-" evidence="1"/>
<dbReference type="EMBL" id="LT708304">
    <property type="protein sequence ID" value="SIU01796.1"/>
    <property type="molecule type" value="Genomic_DNA"/>
</dbReference>
<dbReference type="RefSeq" id="NP_856814.1">
    <property type="nucleotide sequence ID" value="NC_002945.3"/>
</dbReference>
<dbReference type="RefSeq" id="WP_003416417.1">
    <property type="nucleotide sequence ID" value="NC_002945.4"/>
</dbReference>
<dbReference type="SMR" id="P65564"/>
<dbReference type="KEGG" id="mbo:BQ2027_MB3169"/>
<dbReference type="PATRIC" id="fig|233413.5.peg.3487"/>
<dbReference type="Proteomes" id="UP000001419">
    <property type="component" value="Chromosome"/>
</dbReference>
<dbReference type="GO" id="GO:0030964">
    <property type="term" value="C:NADH dehydrogenase complex"/>
    <property type="evidence" value="ECO:0007669"/>
    <property type="project" value="TreeGrafter"/>
</dbReference>
<dbReference type="GO" id="GO:0005886">
    <property type="term" value="C:plasma membrane"/>
    <property type="evidence" value="ECO:0007669"/>
    <property type="project" value="UniProtKB-SubCell"/>
</dbReference>
<dbReference type="GO" id="GO:0008137">
    <property type="term" value="F:NADH dehydrogenase (ubiquinone) activity"/>
    <property type="evidence" value="ECO:0007669"/>
    <property type="project" value="InterPro"/>
</dbReference>
<dbReference type="GO" id="GO:0050136">
    <property type="term" value="F:NADH:ubiquinone reductase (non-electrogenic) activity"/>
    <property type="evidence" value="ECO:0007669"/>
    <property type="project" value="UniProtKB-UniRule"/>
</dbReference>
<dbReference type="GO" id="GO:0048038">
    <property type="term" value="F:quinone binding"/>
    <property type="evidence" value="ECO:0007669"/>
    <property type="project" value="UniProtKB-KW"/>
</dbReference>
<dbReference type="FunFam" id="1.20.58.1610:FF:000002">
    <property type="entry name" value="NADH-quinone oxidoreductase subunit A"/>
    <property type="match status" value="1"/>
</dbReference>
<dbReference type="Gene3D" id="1.20.58.1610">
    <property type="entry name" value="NADH:ubiquinone/plastoquinone oxidoreductase, chain 3"/>
    <property type="match status" value="1"/>
</dbReference>
<dbReference type="HAMAP" id="MF_01394">
    <property type="entry name" value="NDH1_NuoA"/>
    <property type="match status" value="1"/>
</dbReference>
<dbReference type="InterPro" id="IPR023043">
    <property type="entry name" value="NAD(P)H_OxRDtase_bac/plastid"/>
</dbReference>
<dbReference type="InterPro" id="IPR000440">
    <property type="entry name" value="NADH_UbQ/plastoQ_OxRdtase_su3"/>
</dbReference>
<dbReference type="InterPro" id="IPR038430">
    <property type="entry name" value="NDAH_ubi_oxred_su3_sf"/>
</dbReference>
<dbReference type="NCBIfam" id="NF005922">
    <property type="entry name" value="PRK07928.1"/>
    <property type="match status" value="1"/>
</dbReference>
<dbReference type="PANTHER" id="PTHR11058:SF22">
    <property type="entry name" value="NADH-QUINONE OXIDOREDUCTASE SUBUNIT A"/>
    <property type="match status" value="1"/>
</dbReference>
<dbReference type="PANTHER" id="PTHR11058">
    <property type="entry name" value="NADH-UBIQUINONE OXIDOREDUCTASE CHAIN 3"/>
    <property type="match status" value="1"/>
</dbReference>
<dbReference type="Pfam" id="PF00507">
    <property type="entry name" value="Oxidored_q4"/>
    <property type="match status" value="1"/>
</dbReference>
<feature type="chain" id="PRO_0000117871" description="NADH-quinone oxidoreductase subunit A">
    <location>
        <begin position="1"/>
        <end position="128"/>
    </location>
</feature>
<feature type="transmembrane region" description="Helical" evidence="1">
    <location>
        <begin position="5"/>
        <end position="25"/>
    </location>
</feature>
<feature type="transmembrane region" description="Helical" evidence="1">
    <location>
        <begin position="72"/>
        <end position="92"/>
    </location>
</feature>
<feature type="transmembrane region" description="Helical" evidence="1">
    <location>
        <begin position="100"/>
        <end position="120"/>
    </location>
</feature>
<organism>
    <name type="scientific">Mycobacterium bovis (strain ATCC BAA-935 / AF2122/97)</name>
    <dbReference type="NCBI Taxonomy" id="233413"/>
    <lineage>
        <taxon>Bacteria</taxon>
        <taxon>Bacillati</taxon>
        <taxon>Actinomycetota</taxon>
        <taxon>Actinomycetes</taxon>
        <taxon>Mycobacteriales</taxon>
        <taxon>Mycobacteriaceae</taxon>
        <taxon>Mycobacterium</taxon>
        <taxon>Mycobacterium tuberculosis complex</taxon>
    </lineage>
</organism>
<accession>P65564</accession>
<accession>A0A1R3Y3Y1</accession>
<accession>P95181</accession>
<accession>X2BN70</accession>
<proteinExistence type="inferred from homology"/>
<protein>
    <recommendedName>
        <fullName evidence="1">NADH-quinone oxidoreductase subunit A</fullName>
        <ecNumber evidence="1">7.1.1.-</ecNumber>
    </recommendedName>
    <alternativeName>
        <fullName evidence="1">NADH dehydrogenase I subunit A</fullName>
    </alternativeName>
    <alternativeName>
        <fullName evidence="1">NDH-1 subunit A</fullName>
    </alternativeName>
    <alternativeName>
        <fullName evidence="1">NUO1</fullName>
    </alternativeName>
</protein>
<evidence type="ECO:0000255" key="1">
    <source>
        <dbReference type="HAMAP-Rule" id="MF_01394"/>
    </source>
</evidence>
<sequence length="128" mass="13975">MNVYIPILVLAALAAAFAVVSVVIASLVGPSRFNRSKQAAYECGIEPASTGARTSIGPGAASGQRFPIKYYLTAMLFIVFDIEIVFLYPWAVSYDSLGTFALVEMAIFMLTVFVAYAYVWRRGGLTWD</sequence>
<reference key="1">
    <citation type="journal article" date="2003" name="Proc. Natl. Acad. Sci. U.S.A.">
        <title>The complete genome sequence of Mycobacterium bovis.</title>
        <authorList>
            <person name="Garnier T."/>
            <person name="Eiglmeier K."/>
            <person name="Camus J.-C."/>
            <person name="Medina N."/>
            <person name="Mansoor H."/>
            <person name="Pryor M."/>
            <person name="Duthoy S."/>
            <person name="Grondin S."/>
            <person name="Lacroix C."/>
            <person name="Monsempe C."/>
            <person name="Simon S."/>
            <person name="Harris B."/>
            <person name="Atkin R."/>
            <person name="Doggett J."/>
            <person name="Mayes R."/>
            <person name="Keating L."/>
            <person name="Wheeler P.R."/>
            <person name="Parkhill J."/>
            <person name="Barrell B.G."/>
            <person name="Cole S.T."/>
            <person name="Gordon S.V."/>
            <person name="Hewinson R.G."/>
        </authorList>
    </citation>
    <scope>NUCLEOTIDE SEQUENCE [LARGE SCALE GENOMIC DNA]</scope>
    <source>
        <strain>ATCC BAA-935 / AF2122/97</strain>
    </source>
</reference>
<reference key="2">
    <citation type="journal article" date="2017" name="Genome Announc.">
        <title>Updated reference genome sequence and annotation of Mycobacterium bovis AF2122/97.</title>
        <authorList>
            <person name="Malone K.M."/>
            <person name="Farrell D."/>
            <person name="Stuber T.P."/>
            <person name="Schubert O.T."/>
            <person name="Aebersold R."/>
            <person name="Robbe-Austerman S."/>
            <person name="Gordon S.V."/>
        </authorList>
    </citation>
    <scope>NUCLEOTIDE SEQUENCE [LARGE SCALE GENOMIC DNA]</scope>
    <scope>GENOME REANNOTATION</scope>
    <source>
        <strain>ATCC BAA-935 / AF2122/97</strain>
    </source>
</reference>
<gene>
    <name evidence="1" type="primary">nuoA</name>
    <name type="ordered locus">BQ2027_MB3169</name>
</gene>
<name>NUOA_MYCBO</name>
<comment type="function">
    <text evidence="1">NDH-1 shuttles electrons from NADH, via FMN and iron-sulfur (Fe-S) centers, to quinones in the respiratory chain. The immediate electron acceptor for the enzyme in this species is believed to be a menaquinone. Couples the redox reaction to proton translocation (for every two electrons transferred, four hydrogen ions are translocated across the cytoplasmic membrane), and thus conserves the redox energy in a proton gradient.</text>
</comment>
<comment type="catalytic activity">
    <reaction evidence="1">
        <text>a quinone + NADH + 5 H(+)(in) = a quinol + NAD(+) + 4 H(+)(out)</text>
        <dbReference type="Rhea" id="RHEA:57888"/>
        <dbReference type="ChEBI" id="CHEBI:15378"/>
        <dbReference type="ChEBI" id="CHEBI:24646"/>
        <dbReference type="ChEBI" id="CHEBI:57540"/>
        <dbReference type="ChEBI" id="CHEBI:57945"/>
        <dbReference type="ChEBI" id="CHEBI:132124"/>
    </reaction>
</comment>
<comment type="subunit">
    <text evidence="1">NDH-1 is composed of 14 different subunits. Subunits NuoA, H, J, K, L, M, N constitute the membrane sector of the complex.</text>
</comment>
<comment type="subcellular location">
    <subcellularLocation>
        <location evidence="1">Cell membrane</location>
        <topology evidence="1">Multi-pass membrane protein</topology>
    </subcellularLocation>
</comment>
<comment type="similarity">
    <text evidence="1">Belongs to the complex I subunit 3 family.</text>
</comment>